<gene>
    <name evidence="1" type="primary">tsaD</name>
    <name type="synonym">gcp</name>
    <name type="ordered locus">LAR_0332</name>
</gene>
<comment type="function">
    <text evidence="1">Required for the formation of a threonylcarbamoyl group on adenosine at position 37 (t(6)A37) in tRNAs that read codons beginning with adenine. Is involved in the transfer of the threonylcarbamoyl moiety of threonylcarbamoyl-AMP (TC-AMP) to the N6 group of A37, together with TsaE and TsaB. TsaD likely plays a direct catalytic role in this reaction.</text>
</comment>
<comment type="catalytic activity">
    <reaction evidence="1">
        <text>L-threonylcarbamoyladenylate + adenosine(37) in tRNA = N(6)-L-threonylcarbamoyladenosine(37) in tRNA + AMP + H(+)</text>
        <dbReference type="Rhea" id="RHEA:37059"/>
        <dbReference type="Rhea" id="RHEA-COMP:10162"/>
        <dbReference type="Rhea" id="RHEA-COMP:10163"/>
        <dbReference type="ChEBI" id="CHEBI:15378"/>
        <dbReference type="ChEBI" id="CHEBI:73682"/>
        <dbReference type="ChEBI" id="CHEBI:74411"/>
        <dbReference type="ChEBI" id="CHEBI:74418"/>
        <dbReference type="ChEBI" id="CHEBI:456215"/>
        <dbReference type="EC" id="2.3.1.234"/>
    </reaction>
</comment>
<comment type="cofactor">
    <cofactor evidence="1">
        <name>Fe(2+)</name>
        <dbReference type="ChEBI" id="CHEBI:29033"/>
    </cofactor>
    <text evidence="1">Binds 1 Fe(2+) ion per subunit.</text>
</comment>
<comment type="subcellular location">
    <subcellularLocation>
        <location evidence="1">Cytoplasm</location>
    </subcellularLocation>
</comment>
<comment type="similarity">
    <text evidence="1">Belongs to the KAE1 / TsaD family.</text>
</comment>
<evidence type="ECO:0000255" key="1">
    <source>
        <dbReference type="HAMAP-Rule" id="MF_01445"/>
    </source>
</evidence>
<protein>
    <recommendedName>
        <fullName evidence="1">tRNA N6-adenosine threonylcarbamoyltransferase</fullName>
        <ecNumber evidence="1">2.3.1.234</ecNumber>
    </recommendedName>
    <alternativeName>
        <fullName evidence="1">N6-L-threonylcarbamoyladenine synthase</fullName>
        <shortName evidence="1">t(6)A synthase</shortName>
    </alternativeName>
    <alternativeName>
        <fullName evidence="1">t(6)A37 threonylcarbamoyladenosine biosynthesis protein TsaD</fullName>
    </alternativeName>
    <alternativeName>
        <fullName evidence="1">tRNA threonylcarbamoyladenosine biosynthesis protein TsaD</fullName>
    </alternativeName>
</protein>
<name>TSAD_LIMRJ</name>
<organism>
    <name type="scientific">Limosilactobacillus reuteri subsp. reuteri (strain JCM 1112)</name>
    <name type="common">Lactobacillus reuteri</name>
    <dbReference type="NCBI Taxonomy" id="557433"/>
    <lineage>
        <taxon>Bacteria</taxon>
        <taxon>Bacillati</taxon>
        <taxon>Bacillota</taxon>
        <taxon>Bacilli</taxon>
        <taxon>Lactobacillales</taxon>
        <taxon>Lactobacillaceae</taxon>
        <taxon>Limosilactobacillus</taxon>
    </lineage>
</organism>
<dbReference type="EC" id="2.3.1.234" evidence="1"/>
<dbReference type="EMBL" id="AP007281">
    <property type="protein sequence ID" value="BAG24848.1"/>
    <property type="molecule type" value="Genomic_DNA"/>
</dbReference>
<dbReference type="RefSeq" id="WP_003667405.1">
    <property type="nucleotide sequence ID" value="NC_010609.1"/>
</dbReference>
<dbReference type="SMR" id="B2G5W6"/>
<dbReference type="KEGG" id="lrf:LAR_0332"/>
<dbReference type="HOGENOM" id="CLU_023208_0_2_9"/>
<dbReference type="GO" id="GO:0005737">
    <property type="term" value="C:cytoplasm"/>
    <property type="evidence" value="ECO:0007669"/>
    <property type="project" value="UniProtKB-SubCell"/>
</dbReference>
<dbReference type="GO" id="GO:0005506">
    <property type="term" value="F:iron ion binding"/>
    <property type="evidence" value="ECO:0007669"/>
    <property type="project" value="UniProtKB-UniRule"/>
</dbReference>
<dbReference type="GO" id="GO:0061711">
    <property type="term" value="F:N(6)-L-threonylcarbamoyladenine synthase activity"/>
    <property type="evidence" value="ECO:0007669"/>
    <property type="project" value="UniProtKB-EC"/>
</dbReference>
<dbReference type="GO" id="GO:0002949">
    <property type="term" value="P:tRNA threonylcarbamoyladenosine modification"/>
    <property type="evidence" value="ECO:0007669"/>
    <property type="project" value="UniProtKB-UniRule"/>
</dbReference>
<dbReference type="CDD" id="cd24133">
    <property type="entry name" value="ASKHA_NBD_TsaD_bac"/>
    <property type="match status" value="1"/>
</dbReference>
<dbReference type="FunFam" id="3.30.420.40:FF:000012">
    <property type="entry name" value="tRNA N6-adenosine threonylcarbamoyltransferase"/>
    <property type="match status" value="1"/>
</dbReference>
<dbReference type="FunFam" id="3.30.420.40:FF:000040">
    <property type="entry name" value="tRNA N6-adenosine threonylcarbamoyltransferase"/>
    <property type="match status" value="1"/>
</dbReference>
<dbReference type="Gene3D" id="3.30.420.40">
    <property type="match status" value="2"/>
</dbReference>
<dbReference type="HAMAP" id="MF_01445">
    <property type="entry name" value="TsaD"/>
    <property type="match status" value="1"/>
</dbReference>
<dbReference type="InterPro" id="IPR043129">
    <property type="entry name" value="ATPase_NBD"/>
</dbReference>
<dbReference type="InterPro" id="IPR000905">
    <property type="entry name" value="Gcp-like_dom"/>
</dbReference>
<dbReference type="InterPro" id="IPR017861">
    <property type="entry name" value="KAE1/TsaD"/>
</dbReference>
<dbReference type="InterPro" id="IPR017860">
    <property type="entry name" value="Peptidase_M22_CS"/>
</dbReference>
<dbReference type="InterPro" id="IPR022450">
    <property type="entry name" value="TsaD"/>
</dbReference>
<dbReference type="NCBIfam" id="TIGR00329">
    <property type="entry name" value="gcp_kae1"/>
    <property type="match status" value="1"/>
</dbReference>
<dbReference type="NCBIfam" id="TIGR03723">
    <property type="entry name" value="T6A_TsaD_YgjD"/>
    <property type="match status" value="1"/>
</dbReference>
<dbReference type="PANTHER" id="PTHR11735">
    <property type="entry name" value="TRNA N6-ADENOSINE THREONYLCARBAMOYLTRANSFERASE"/>
    <property type="match status" value="1"/>
</dbReference>
<dbReference type="PANTHER" id="PTHR11735:SF6">
    <property type="entry name" value="TRNA N6-ADENOSINE THREONYLCARBAMOYLTRANSFERASE, MITOCHONDRIAL"/>
    <property type="match status" value="1"/>
</dbReference>
<dbReference type="Pfam" id="PF00814">
    <property type="entry name" value="TsaD"/>
    <property type="match status" value="1"/>
</dbReference>
<dbReference type="PRINTS" id="PR00789">
    <property type="entry name" value="OSIALOPTASE"/>
</dbReference>
<dbReference type="SUPFAM" id="SSF53067">
    <property type="entry name" value="Actin-like ATPase domain"/>
    <property type="match status" value="1"/>
</dbReference>
<dbReference type="PROSITE" id="PS01016">
    <property type="entry name" value="GLYCOPROTEASE"/>
    <property type="match status" value="1"/>
</dbReference>
<keyword id="KW-0012">Acyltransferase</keyword>
<keyword id="KW-0963">Cytoplasm</keyword>
<keyword id="KW-0408">Iron</keyword>
<keyword id="KW-0479">Metal-binding</keyword>
<keyword id="KW-0808">Transferase</keyword>
<keyword id="KW-0819">tRNA processing</keyword>
<proteinExistence type="inferred from homology"/>
<feature type="chain" id="PRO_1000145993" description="tRNA N6-adenosine threonylcarbamoyltransferase">
    <location>
        <begin position="1"/>
        <end position="343"/>
    </location>
</feature>
<feature type="binding site" evidence="1">
    <location>
        <position position="115"/>
    </location>
    <ligand>
        <name>Fe cation</name>
        <dbReference type="ChEBI" id="CHEBI:24875"/>
    </ligand>
</feature>
<feature type="binding site" evidence="1">
    <location>
        <position position="119"/>
    </location>
    <ligand>
        <name>Fe cation</name>
        <dbReference type="ChEBI" id="CHEBI:24875"/>
    </ligand>
</feature>
<feature type="binding site" evidence="1">
    <location>
        <begin position="137"/>
        <end position="141"/>
    </location>
    <ligand>
        <name>substrate</name>
    </ligand>
</feature>
<feature type="binding site" evidence="1">
    <location>
        <position position="170"/>
    </location>
    <ligand>
        <name>substrate</name>
    </ligand>
</feature>
<feature type="binding site" evidence="1">
    <location>
        <position position="183"/>
    </location>
    <ligand>
        <name>substrate</name>
    </ligand>
</feature>
<feature type="binding site" evidence="1">
    <location>
        <position position="187"/>
    </location>
    <ligand>
        <name>substrate</name>
    </ligand>
</feature>
<feature type="binding site" evidence="1">
    <location>
        <position position="276"/>
    </location>
    <ligand>
        <name>substrate</name>
    </ligand>
</feature>
<feature type="binding site" evidence="1">
    <location>
        <position position="306"/>
    </location>
    <ligand>
        <name>Fe cation</name>
        <dbReference type="ChEBI" id="CHEBI:24875"/>
    </ligand>
</feature>
<reference key="1">
    <citation type="journal article" date="2008" name="DNA Res.">
        <title>Comparative genome analysis of Lactobacillus reuteri and Lactobacillus fermentum reveal a genomic island for reuterin and cobalamin production.</title>
        <authorList>
            <person name="Morita H."/>
            <person name="Toh H."/>
            <person name="Fukuda S."/>
            <person name="Horikawa H."/>
            <person name="Oshima K."/>
            <person name="Suzuki T."/>
            <person name="Murakami M."/>
            <person name="Hisamatsu S."/>
            <person name="Kato Y."/>
            <person name="Takizawa T."/>
            <person name="Fukuoka H."/>
            <person name="Yoshimura T."/>
            <person name="Itoh K."/>
            <person name="O'Sullivan D.J."/>
            <person name="McKay L.L."/>
            <person name="Ohno H."/>
            <person name="Kikuchi J."/>
            <person name="Masaoka T."/>
            <person name="Hattori M."/>
        </authorList>
    </citation>
    <scope>NUCLEOTIDE SEQUENCE [LARGE SCALE GENOMIC DNA]</scope>
    <source>
        <strain>JCM 1112</strain>
    </source>
</reference>
<sequence>MTERTLTLAFESSCDETSVAVIENGTKILSNIVATQIDSHQRFGGVVPEVASRHHIEQITKCTNEALEQADVDYNDLDAVAVTYGPGLVGSLLIGVTAAKAIAWAHNLPLVPVNHMAGHIYAARYVGEFQYPQMALLVSGGHTELVYMPSEHEYQIIGETRDDAAGEAYDKIGRVLGVNYPAGKTIDEWAAKGKDTFNFPRAMEKEDNYDFSFSGLKSAFINTVHNADQRGEKLDKYDLAASFQQSVIDVLAEKTMRALDDYPVKQLILAGGVAANHGLRARLDHDMKEFHPDVPMLQAPLKLCGDNAAMIGAAGYVNYKHGDRAGLDLNAVPGLMFDRIQSK</sequence>
<accession>B2G5W6</accession>